<dbReference type="EC" id="2.3.1.-" evidence="4 5 6"/>
<dbReference type="EC" id="3.1.1.32" evidence="4 5 6"/>
<dbReference type="EC" id="3.1.1.4" evidence="4 5 6"/>
<dbReference type="EMBL" id="AB453251">
    <property type="protein sequence ID" value="BAH22445.1"/>
    <property type="molecule type" value="mRNA"/>
</dbReference>
<dbReference type="EMBL" id="AK000563">
    <property type="protein sequence ID" value="BAA91256.1"/>
    <property type="molecule type" value="mRNA"/>
</dbReference>
<dbReference type="EMBL" id="CH471076">
    <property type="protein sequence ID" value="EAW74157.1"/>
    <property type="molecule type" value="Genomic_DNA"/>
</dbReference>
<dbReference type="CCDS" id="CCDS8046.1"/>
<dbReference type="RefSeq" id="NP_060348.1">
    <property type="nucleotide sequence ID" value="NM_017878.2"/>
</dbReference>
<dbReference type="PDB" id="4DPZ">
    <property type="method" value="X-ray"/>
    <property type="resolution" value="1.25 A"/>
    <property type="chains" value="X=1-129"/>
</dbReference>
<dbReference type="PDBsum" id="4DPZ"/>
<dbReference type="SMR" id="Q9NWW9"/>
<dbReference type="BioGRID" id="120315">
    <property type="interactions" value="17"/>
</dbReference>
<dbReference type="FunCoup" id="Q9NWW9">
    <property type="interactions" value="525"/>
</dbReference>
<dbReference type="IntAct" id="Q9NWW9">
    <property type="interactions" value="12"/>
</dbReference>
<dbReference type="STRING" id="9606.ENSP00000255695"/>
<dbReference type="BindingDB" id="Q9NWW9"/>
<dbReference type="ChEMBL" id="CHEMBL4630860"/>
<dbReference type="SwissLipids" id="SLP:000001075"/>
<dbReference type="iPTMnet" id="Q9NWW9"/>
<dbReference type="PhosphoSitePlus" id="Q9NWW9"/>
<dbReference type="BioMuta" id="HRASLS2"/>
<dbReference type="DMDM" id="23396611"/>
<dbReference type="MassIVE" id="Q9NWW9"/>
<dbReference type="PaxDb" id="9606-ENSP00000255695"/>
<dbReference type="PeptideAtlas" id="Q9NWW9"/>
<dbReference type="Antibodypedia" id="28975">
    <property type="antibodies" value="88 antibodies from 24 providers"/>
</dbReference>
<dbReference type="DNASU" id="54979"/>
<dbReference type="Ensembl" id="ENST00000255695.2">
    <property type="protein sequence ID" value="ENSP00000255695.1"/>
    <property type="gene ID" value="ENSG00000133328.4"/>
</dbReference>
<dbReference type="GeneID" id="54979"/>
<dbReference type="KEGG" id="hsa:54979"/>
<dbReference type="MANE-Select" id="ENST00000255695.2">
    <property type="protein sequence ID" value="ENSP00000255695.1"/>
    <property type="RefSeq nucleotide sequence ID" value="NM_017878.2"/>
    <property type="RefSeq protein sequence ID" value="NP_060348.1"/>
</dbReference>
<dbReference type="UCSC" id="uc001nxg.1">
    <property type="organism name" value="human"/>
</dbReference>
<dbReference type="AGR" id="HGNC:17824"/>
<dbReference type="CTD" id="54979"/>
<dbReference type="DisGeNET" id="54979"/>
<dbReference type="GeneCards" id="PLAAT2"/>
<dbReference type="HGNC" id="HGNC:17824">
    <property type="gene designation" value="PLAAT2"/>
</dbReference>
<dbReference type="HPA" id="ENSG00000133328">
    <property type="expression patterns" value="Tissue enriched (intestine)"/>
</dbReference>
<dbReference type="MIM" id="613866">
    <property type="type" value="gene"/>
</dbReference>
<dbReference type="neXtProt" id="NX_Q9NWW9"/>
<dbReference type="OpenTargets" id="ENSG00000133328"/>
<dbReference type="VEuPathDB" id="HostDB:ENSG00000133328"/>
<dbReference type="eggNOG" id="ENOG502S0JN">
    <property type="taxonomic scope" value="Eukaryota"/>
</dbReference>
<dbReference type="GeneTree" id="ENSGT00940000154853"/>
<dbReference type="HOGENOM" id="CLU_109418_0_1_1"/>
<dbReference type="InParanoid" id="Q9NWW9"/>
<dbReference type="OMA" id="FGYAHWA"/>
<dbReference type="OrthoDB" id="421951at2759"/>
<dbReference type="PAN-GO" id="Q9NWW9">
    <property type="GO annotations" value="5 GO annotations based on evolutionary models"/>
</dbReference>
<dbReference type="PhylomeDB" id="Q9NWW9"/>
<dbReference type="TreeFam" id="TF330836"/>
<dbReference type="BioCyc" id="MetaCyc:ENSG00000133328-MONOMER"/>
<dbReference type="BRENDA" id="2.7.1.22">
    <property type="organism ID" value="2681"/>
</dbReference>
<dbReference type="PathwayCommons" id="Q9NWW9"/>
<dbReference type="Reactome" id="R-HSA-1482839">
    <property type="pathway name" value="Acyl chain remodelling of PE"/>
</dbReference>
<dbReference type="SignaLink" id="Q9NWW9"/>
<dbReference type="BioGRID-ORCS" id="54979">
    <property type="hits" value="15 hits in 1142 CRISPR screens"/>
</dbReference>
<dbReference type="EvolutionaryTrace" id="Q9NWW9"/>
<dbReference type="GenomeRNAi" id="54979"/>
<dbReference type="Pharos" id="Q9NWW9">
    <property type="development level" value="Tchem"/>
</dbReference>
<dbReference type="PRO" id="PR:Q9NWW9"/>
<dbReference type="Proteomes" id="UP000005640">
    <property type="component" value="Chromosome 11"/>
</dbReference>
<dbReference type="RNAct" id="Q9NWW9">
    <property type="molecule type" value="protein"/>
</dbReference>
<dbReference type="Bgee" id="ENSG00000133328">
    <property type="expression patterns" value="Expressed in duodenum and 149 other cell types or tissues"/>
</dbReference>
<dbReference type="GO" id="GO:0005737">
    <property type="term" value="C:cytoplasm"/>
    <property type="evidence" value="ECO:0000318"/>
    <property type="project" value="GO_Central"/>
</dbReference>
<dbReference type="GO" id="GO:0005829">
    <property type="term" value="C:cytosol"/>
    <property type="evidence" value="ECO:0000304"/>
    <property type="project" value="Reactome"/>
</dbReference>
<dbReference type="GO" id="GO:0016020">
    <property type="term" value="C:membrane"/>
    <property type="evidence" value="ECO:0007669"/>
    <property type="project" value="UniProtKB-SubCell"/>
</dbReference>
<dbReference type="GO" id="GO:0016746">
    <property type="term" value="F:acyltransferase activity"/>
    <property type="evidence" value="ECO:0000304"/>
    <property type="project" value="Reactome"/>
</dbReference>
<dbReference type="GO" id="GO:0016410">
    <property type="term" value="F:N-acyltransferase activity"/>
    <property type="evidence" value="ECO:0000314"/>
    <property type="project" value="UniProtKB"/>
</dbReference>
<dbReference type="GO" id="GO:0008970">
    <property type="term" value="F:phospholipase A1 activity"/>
    <property type="evidence" value="ECO:0000314"/>
    <property type="project" value="UniProtKB"/>
</dbReference>
<dbReference type="GO" id="GO:0004623">
    <property type="term" value="F:phospholipase A2 activity"/>
    <property type="evidence" value="ECO:0000314"/>
    <property type="project" value="UniProtKB"/>
</dbReference>
<dbReference type="GO" id="GO:0016042">
    <property type="term" value="P:lipid catabolic process"/>
    <property type="evidence" value="ECO:0007669"/>
    <property type="project" value="UniProtKB-KW"/>
</dbReference>
<dbReference type="GO" id="GO:0070292">
    <property type="term" value="P:N-acylphosphatidylethanolamine metabolic process"/>
    <property type="evidence" value="ECO:0000314"/>
    <property type="project" value="UniProtKB"/>
</dbReference>
<dbReference type="GO" id="GO:0036152">
    <property type="term" value="P:phosphatidylethanolamine acyl-chain remodeling"/>
    <property type="evidence" value="ECO:0000304"/>
    <property type="project" value="Reactome"/>
</dbReference>
<dbReference type="DisProt" id="DP02737"/>
<dbReference type="FunFam" id="3.90.1720.10:FF:000002">
    <property type="entry name" value="HRAS like suppressor 2"/>
    <property type="match status" value="1"/>
</dbReference>
<dbReference type="Gene3D" id="3.90.1720.10">
    <property type="entry name" value="endopeptidase domain like (from Nostoc punctiforme)"/>
    <property type="match status" value="1"/>
</dbReference>
<dbReference type="InterPro" id="IPR051496">
    <property type="entry name" value="H-rev107_PLA/AT"/>
</dbReference>
<dbReference type="InterPro" id="IPR007053">
    <property type="entry name" value="LRAT_dom"/>
</dbReference>
<dbReference type="PANTHER" id="PTHR13943">
    <property type="entry name" value="HRAS-LIKE SUPPRESSOR - RELATED"/>
    <property type="match status" value="1"/>
</dbReference>
<dbReference type="PANTHER" id="PTHR13943:SF33">
    <property type="entry name" value="PHOSPHOLIPASE A AND ACYLTRANSFERASE 2"/>
    <property type="match status" value="1"/>
</dbReference>
<dbReference type="Pfam" id="PF04970">
    <property type="entry name" value="LRAT"/>
    <property type="match status" value="1"/>
</dbReference>
<dbReference type="PROSITE" id="PS51934">
    <property type="entry name" value="LRAT"/>
    <property type="match status" value="1"/>
</dbReference>
<reference key="1">
    <citation type="journal article" date="2009" name="Biochim. Biophys. Acta">
        <title>Characterization of the human tumor suppressors TIG3 and HRASLS2 as phospholipid-metabolizing enzymes.</title>
        <authorList>
            <person name="Uyama T."/>
            <person name="Jin X.H."/>
            <person name="Tsuboi K."/>
            <person name="Tonai T."/>
            <person name="Ueda N."/>
        </authorList>
    </citation>
    <scope>NUCLEOTIDE SEQUENCE [MRNA]</scope>
    <scope>FUNCTION</scope>
    <scope>TISSUE SPECIFICITY</scope>
    <scope>BIOPHYSICOCHEMICAL PROPERTIES</scope>
    <scope>CATALYTIC ACTIVITY</scope>
    <source>
        <tissue>Testis</tissue>
    </source>
</reference>
<reference key="2">
    <citation type="journal article" date="2004" name="Nat. Genet.">
        <title>Complete sequencing and characterization of 21,243 full-length human cDNAs.</title>
        <authorList>
            <person name="Ota T."/>
            <person name="Suzuki Y."/>
            <person name="Nishikawa T."/>
            <person name="Otsuki T."/>
            <person name="Sugiyama T."/>
            <person name="Irie R."/>
            <person name="Wakamatsu A."/>
            <person name="Hayashi K."/>
            <person name="Sato H."/>
            <person name="Nagai K."/>
            <person name="Kimura K."/>
            <person name="Makita H."/>
            <person name="Sekine M."/>
            <person name="Obayashi M."/>
            <person name="Nishi T."/>
            <person name="Shibahara T."/>
            <person name="Tanaka T."/>
            <person name="Ishii S."/>
            <person name="Yamamoto J."/>
            <person name="Saito K."/>
            <person name="Kawai Y."/>
            <person name="Isono Y."/>
            <person name="Nakamura Y."/>
            <person name="Nagahari K."/>
            <person name="Murakami K."/>
            <person name="Yasuda T."/>
            <person name="Iwayanagi T."/>
            <person name="Wagatsuma M."/>
            <person name="Shiratori A."/>
            <person name="Sudo H."/>
            <person name="Hosoiri T."/>
            <person name="Kaku Y."/>
            <person name="Kodaira H."/>
            <person name="Kondo H."/>
            <person name="Sugawara M."/>
            <person name="Takahashi M."/>
            <person name="Kanda K."/>
            <person name="Yokoi T."/>
            <person name="Furuya T."/>
            <person name="Kikkawa E."/>
            <person name="Omura Y."/>
            <person name="Abe K."/>
            <person name="Kamihara K."/>
            <person name="Katsuta N."/>
            <person name="Sato K."/>
            <person name="Tanikawa M."/>
            <person name="Yamazaki M."/>
            <person name="Ninomiya K."/>
            <person name="Ishibashi T."/>
            <person name="Yamashita H."/>
            <person name="Murakawa K."/>
            <person name="Fujimori K."/>
            <person name="Tanai H."/>
            <person name="Kimata M."/>
            <person name="Watanabe M."/>
            <person name="Hiraoka S."/>
            <person name="Chiba Y."/>
            <person name="Ishida S."/>
            <person name="Ono Y."/>
            <person name="Takiguchi S."/>
            <person name="Watanabe S."/>
            <person name="Yosida M."/>
            <person name="Hotuta T."/>
            <person name="Kusano J."/>
            <person name="Kanehori K."/>
            <person name="Takahashi-Fujii A."/>
            <person name="Hara H."/>
            <person name="Tanase T.-O."/>
            <person name="Nomura Y."/>
            <person name="Togiya S."/>
            <person name="Komai F."/>
            <person name="Hara R."/>
            <person name="Takeuchi K."/>
            <person name="Arita M."/>
            <person name="Imose N."/>
            <person name="Musashino K."/>
            <person name="Yuuki H."/>
            <person name="Oshima A."/>
            <person name="Sasaki N."/>
            <person name="Aotsuka S."/>
            <person name="Yoshikawa Y."/>
            <person name="Matsunawa H."/>
            <person name="Ichihara T."/>
            <person name="Shiohata N."/>
            <person name="Sano S."/>
            <person name="Moriya S."/>
            <person name="Momiyama H."/>
            <person name="Satoh N."/>
            <person name="Takami S."/>
            <person name="Terashima Y."/>
            <person name="Suzuki O."/>
            <person name="Nakagawa S."/>
            <person name="Senoh A."/>
            <person name="Mizoguchi H."/>
            <person name="Goto Y."/>
            <person name="Shimizu F."/>
            <person name="Wakebe H."/>
            <person name="Hishigaki H."/>
            <person name="Watanabe T."/>
            <person name="Sugiyama A."/>
            <person name="Takemoto M."/>
            <person name="Kawakami B."/>
            <person name="Yamazaki M."/>
            <person name="Watanabe K."/>
            <person name="Kumagai A."/>
            <person name="Itakura S."/>
            <person name="Fukuzumi Y."/>
            <person name="Fujimori Y."/>
            <person name="Komiyama M."/>
            <person name="Tashiro H."/>
            <person name="Tanigami A."/>
            <person name="Fujiwara T."/>
            <person name="Ono T."/>
            <person name="Yamada K."/>
            <person name="Fujii Y."/>
            <person name="Ozaki K."/>
            <person name="Hirao M."/>
            <person name="Ohmori Y."/>
            <person name="Kawabata A."/>
            <person name="Hikiji T."/>
            <person name="Kobatake N."/>
            <person name="Inagaki H."/>
            <person name="Ikema Y."/>
            <person name="Okamoto S."/>
            <person name="Okitani R."/>
            <person name="Kawakami T."/>
            <person name="Noguchi S."/>
            <person name="Itoh T."/>
            <person name="Shigeta K."/>
            <person name="Senba T."/>
            <person name="Matsumura K."/>
            <person name="Nakajima Y."/>
            <person name="Mizuno T."/>
            <person name="Morinaga M."/>
            <person name="Sasaki M."/>
            <person name="Togashi T."/>
            <person name="Oyama M."/>
            <person name="Hata H."/>
            <person name="Watanabe M."/>
            <person name="Komatsu T."/>
            <person name="Mizushima-Sugano J."/>
            <person name="Satoh T."/>
            <person name="Shirai Y."/>
            <person name="Takahashi Y."/>
            <person name="Nakagawa K."/>
            <person name="Okumura K."/>
            <person name="Nagase T."/>
            <person name="Nomura N."/>
            <person name="Kikuchi H."/>
            <person name="Masuho Y."/>
            <person name="Yamashita R."/>
            <person name="Nakai K."/>
            <person name="Yada T."/>
            <person name="Nakamura Y."/>
            <person name="Ohara O."/>
            <person name="Isogai T."/>
            <person name="Sugano S."/>
        </authorList>
    </citation>
    <scope>NUCLEOTIDE SEQUENCE [LARGE SCALE MRNA]</scope>
    <source>
        <tissue>Signet-ring cell carcinoma</tissue>
    </source>
</reference>
<reference key="3">
    <citation type="submission" date="2005-07" db="EMBL/GenBank/DDBJ databases">
        <authorList>
            <person name="Mural R.J."/>
            <person name="Istrail S."/>
            <person name="Sutton G.G."/>
            <person name="Florea L."/>
            <person name="Halpern A.L."/>
            <person name="Mobarry C.M."/>
            <person name="Lippert R."/>
            <person name="Walenz B."/>
            <person name="Shatkay H."/>
            <person name="Dew I."/>
            <person name="Miller J.R."/>
            <person name="Flanigan M.J."/>
            <person name="Edwards N.J."/>
            <person name="Bolanos R."/>
            <person name="Fasulo D."/>
            <person name="Halldorsson B.V."/>
            <person name="Hannenhalli S."/>
            <person name="Turner R."/>
            <person name="Yooseph S."/>
            <person name="Lu F."/>
            <person name="Nusskern D.R."/>
            <person name="Shue B.C."/>
            <person name="Zheng X.H."/>
            <person name="Zhong F."/>
            <person name="Delcher A.L."/>
            <person name="Huson D.H."/>
            <person name="Kravitz S.A."/>
            <person name="Mouchard L."/>
            <person name="Reinert K."/>
            <person name="Remington K.A."/>
            <person name="Clark A.G."/>
            <person name="Waterman M.S."/>
            <person name="Eichler E.E."/>
            <person name="Adams M.D."/>
            <person name="Hunkapiller M.W."/>
            <person name="Myers E.W."/>
            <person name="Venter J.C."/>
        </authorList>
    </citation>
    <scope>NUCLEOTIDE SEQUENCE [LARGE SCALE GENOMIC DNA]</scope>
</reference>
<reference key="4">
    <citation type="journal article" date="2008" name="Amino Acids">
        <title>Cloning and functional characterization of the HRASLS2 gene.</title>
        <authorList>
            <person name="Shyu R.Y."/>
            <person name="Hsieh Y.C."/>
            <person name="Tsai F.M."/>
            <person name="Wu C.C."/>
            <person name="Jiang S.Y."/>
        </authorList>
    </citation>
    <scope>SUBCELLULAR LOCATION</scope>
    <scope>TISSUE SPECIFICITY</scope>
</reference>
<reference key="5">
    <citation type="journal article" date="2012" name="J. Biol. Chem.">
        <title>Generation of N-acylphosphatidylethanolamine by members of the phospholipase A/acyltransferase (PLA/AT) family.</title>
        <authorList>
            <person name="Uyama T."/>
            <person name="Ikematsu N."/>
            <person name="Inoue M."/>
            <person name="Shinohara N."/>
            <person name="Jin X.H."/>
            <person name="Tsuboi K."/>
            <person name="Tonai T."/>
            <person name="Tokumura A."/>
            <person name="Ueda N."/>
        </authorList>
    </citation>
    <scope>FUNCTION</scope>
    <scope>CATALYTIC ACTIVITY</scope>
    <scope>MUTAGENESIS OF CYS-113</scope>
</reference>
<reference key="6">
    <citation type="journal article" date="2015" name="J. Biomed. Sci.">
        <title>The HRASLS (PLA/AT) subfamily of enzymes.</title>
        <authorList>
            <person name="Mardian E.B."/>
            <person name="Bradley R.M."/>
            <person name="Duncan R.E."/>
        </authorList>
    </citation>
    <scope>REVIEW</scope>
</reference>
<reference key="7">
    <citation type="journal article" date="2012" name="J. Biol. Chem.">
        <title>Structural basis for the acyltransferase activity of lecithin:retinol acyltransferase-like proteins.</title>
        <authorList>
            <person name="Golczak M."/>
            <person name="Kiser P.D."/>
            <person name="Sears A.E."/>
            <person name="Lodowski D.T."/>
            <person name="Blaner W.S."/>
            <person name="Palczewski K."/>
        </authorList>
    </citation>
    <scope>X-RAY CRYSTALLOGRAPHY (1.25 ANGSTROMS) OF 1-129</scope>
    <scope>FUNCTION</scope>
    <scope>CATALYTIC ACTIVITY</scope>
    <scope>ACTIVE SITE</scope>
    <scope>SUBCELLULAR LOCATION</scope>
</reference>
<organism>
    <name type="scientific">Homo sapiens</name>
    <name type="common">Human</name>
    <dbReference type="NCBI Taxonomy" id="9606"/>
    <lineage>
        <taxon>Eukaryota</taxon>
        <taxon>Metazoa</taxon>
        <taxon>Chordata</taxon>
        <taxon>Craniata</taxon>
        <taxon>Vertebrata</taxon>
        <taxon>Euteleostomi</taxon>
        <taxon>Mammalia</taxon>
        <taxon>Eutheria</taxon>
        <taxon>Euarchontoglires</taxon>
        <taxon>Primates</taxon>
        <taxon>Haplorrhini</taxon>
        <taxon>Catarrhini</taxon>
        <taxon>Hominidae</taxon>
        <taxon>Homo</taxon>
    </lineage>
</organism>
<evidence type="ECO:0000255" key="1"/>
<evidence type="ECO:0000255" key="2">
    <source>
        <dbReference type="PROSITE-ProRule" id="PRU01283"/>
    </source>
</evidence>
<evidence type="ECO:0000269" key="3">
    <source>
    </source>
</evidence>
<evidence type="ECO:0000269" key="4">
    <source>
    </source>
</evidence>
<evidence type="ECO:0000269" key="5">
    <source>
    </source>
</evidence>
<evidence type="ECO:0000269" key="6">
    <source>
    </source>
</evidence>
<evidence type="ECO:0000303" key="7">
    <source>
    </source>
</evidence>
<evidence type="ECO:0000305" key="8"/>
<evidence type="ECO:0000312" key="9">
    <source>
        <dbReference type="HGNC" id="HGNC:17824"/>
    </source>
</evidence>
<accession>Q9NWW9</accession>
<accession>B9A7L8</accession>
<feature type="chain" id="PRO_0000152483" description="Phospholipase A and acyltransferase 2">
    <location>
        <begin position="1"/>
        <end position="162"/>
    </location>
</feature>
<feature type="topological domain" description="Cytoplasmic" evidence="1">
    <location>
        <begin position="1"/>
        <end position="133"/>
    </location>
</feature>
<feature type="transmembrane region" description="Helical" evidence="1">
    <location>
        <begin position="134"/>
        <end position="154"/>
    </location>
</feature>
<feature type="topological domain" description="Lumenal" evidence="1">
    <location>
        <begin position="155"/>
        <end position="162"/>
    </location>
</feature>
<feature type="domain" description="LRAT" evidence="2">
    <location>
        <begin position="13"/>
        <end position="129"/>
    </location>
</feature>
<feature type="active site" evidence="2 5">
    <location>
        <position position="23"/>
    </location>
</feature>
<feature type="active site" evidence="2 5">
    <location>
        <position position="35"/>
    </location>
</feature>
<feature type="active site" description="Acyl-thioester intermediate" evidence="2 5">
    <location>
        <position position="113"/>
    </location>
</feature>
<feature type="mutagenesis site" description="Loss of N-acyltransferase activity." evidence="6">
    <original>C</original>
    <variation>S</variation>
    <location>
        <position position="113"/>
    </location>
</feature>
<proteinExistence type="evidence at protein level"/>
<gene>
    <name evidence="9" type="primary">PLAAT2</name>
    <name type="synonym">HRASLS2</name>
</gene>
<protein>
    <recommendedName>
        <fullName evidence="9">Phospholipase A and acyltransferase 2</fullName>
        <ecNumber evidence="4 5 6">2.3.1.-</ecNumber>
        <ecNumber evidence="4 5 6">3.1.1.32</ecNumber>
        <ecNumber evidence="4 5 6">3.1.1.4</ecNumber>
    </recommendedName>
    <alternativeName>
        <fullName>HRAS-like suppressor 2</fullName>
    </alternativeName>
</protein>
<sequence>MALARPRPRLGDLIEISRFGYAHWAIYVGDGYVVHLAPASEIAGAGAASVLSALTNKAIVKKELLSVVAGGDNYRVNNKHDDRYTPLPSNKIVKRAEELVGQELPYSLTSDNCEHFVNHLRYGVSRSDQVTGAVTTVGVAAGLLAAASLVGILLARSKRERQ</sequence>
<keyword id="KW-0002">3D-structure</keyword>
<keyword id="KW-0012">Acyltransferase</keyword>
<keyword id="KW-0963">Cytoplasm</keyword>
<keyword id="KW-0378">Hydrolase</keyword>
<keyword id="KW-0442">Lipid degradation</keyword>
<keyword id="KW-0443">Lipid metabolism</keyword>
<keyword id="KW-0472">Membrane</keyword>
<keyword id="KW-1267">Proteomics identification</keyword>
<keyword id="KW-1185">Reference proteome</keyword>
<keyword id="KW-0808">Transferase</keyword>
<keyword id="KW-0812">Transmembrane</keyword>
<keyword id="KW-1133">Transmembrane helix</keyword>
<comment type="function">
    <text evidence="4 5 6 7">Exhibits both phospholipase A1/2 and acyltransferase activities (PubMed:19615464, PubMed:22605381, PubMed:22825852, PubMed:26503625). Shows phospholipase A1 (PLA1) and A2 (PLA2) activity, catalyzing the calcium-independent release of fatty acids from the sn-1 or sn-2 position of glycerophospholipids (PubMed:19615464, PubMed:22605381, PubMed:22825852). For most substrates, PLA1 activity is much higher than PLA2 activity (PubMed:19615464). Shows O-acyltransferase activity, catalyzing the transfer of a fatty acyl group from glycerophospholipid to the hydroxyl group of lysophospholipid (PubMed:19615464). Shows N-acyltransferase activity, catalyzing the calcium-independent transfer of a fatty acyl group at the sn-1 position of phosphatidylcholine (PC) and other glycerophospholipids to the primary amine of phosphatidylethanolamine (PE), forming N-acylphosphatidylethanolamine (NAPE), which serves as precursor for N-acylethanolamines (NAEs) (PubMed:19615464, PubMed:22605381, PubMed:22825852). Catalyzes N-acylation of PE using both sn-1 and sn-2 palmitoyl groups of PC as acyl donor (PubMed:22605381). Exhibits high phospholipase A1/2 activity and low N-acyltransferase activity (PubMed:22825852).</text>
</comment>
<comment type="catalytic activity">
    <reaction evidence="4 5 6">
        <text>a 1,2-diacyl-sn-glycero-3-phosphocholine + H2O = a 1-acyl-sn-glycero-3-phosphocholine + a fatty acid + H(+)</text>
        <dbReference type="Rhea" id="RHEA:15801"/>
        <dbReference type="ChEBI" id="CHEBI:15377"/>
        <dbReference type="ChEBI" id="CHEBI:15378"/>
        <dbReference type="ChEBI" id="CHEBI:28868"/>
        <dbReference type="ChEBI" id="CHEBI:57643"/>
        <dbReference type="ChEBI" id="CHEBI:58168"/>
        <dbReference type="EC" id="3.1.1.4"/>
    </reaction>
    <physiologicalReaction direction="left-to-right" evidence="4">
        <dbReference type="Rhea" id="RHEA:15802"/>
    </physiologicalReaction>
</comment>
<comment type="catalytic activity">
    <reaction evidence="4 5 6">
        <text>a 1,2-diacyl-sn-glycero-3-phosphocholine + H2O = a 2-acyl-sn-glycero-3-phosphocholine + a fatty acid + H(+)</text>
        <dbReference type="Rhea" id="RHEA:18689"/>
        <dbReference type="ChEBI" id="CHEBI:15377"/>
        <dbReference type="ChEBI" id="CHEBI:15378"/>
        <dbReference type="ChEBI" id="CHEBI:28868"/>
        <dbReference type="ChEBI" id="CHEBI:57643"/>
        <dbReference type="ChEBI" id="CHEBI:57875"/>
        <dbReference type="EC" id="3.1.1.32"/>
    </reaction>
    <physiologicalReaction direction="left-to-right" evidence="4">
        <dbReference type="Rhea" id="RHEA:18690"/>
    </physiologicalReaction>
</comment>
<comment type="catalytic activity">
    <reaction evidence="4">
        <text>a 1,2-diacyl-sn-glycero-3-phosphoethanolamine + a 1,2-diacyl-sn-glycero-3-phosphocholine = an N-acyl-1,2-diacyl-sn-glycero-3-phosphoethanolamine + a 1-acyl-sn-glycero-3-phosphocholine + H(+)</text>
        <dbReference type="Rhea" id="RHEA:45192"/>
        <dbReference type="ChEBI" id="CHEBI:15378"/>
        <dbReference type="ChEBI" id="CHEBI:57643"/>
        <dbReference type="ChEBI" id="CHEBI:58168"/>
        <dbReference type="ChEBI" id="CHEBI:62537"/>
        <dbReference type="ChEBI" id="CHEBI:64612"/>
    </reaction>
    <physiologicalReaction direction="left-to-right" evidence="4">
        <dbReference type="Rhea" id="RHEA:45193"/>
    </physiologicalReaction>
</comment>
<comment type="catalytic activity">
    <reaction evidence="4">
        <text>a 1,2-diacyl-sn-glycero-3-phosphoethanolamine + a 1,2-diacyl-sn-glycero-3-phosphocholine = an N-acyl-1,2-diacyl-sn-glycero-3-phosphoethanolamine + a 2-acyl-sn-glycero-3-phosphocholine + H(+)</text>
        <dbReference type="Rhea" id="RHEA:45188"/>
        <dbReference type="ChEBI" id="CHEBI:15378"/>
        <dbReference type="ChEBI" id="CHEBI:57643"/>
        <dbReference type="ChEBI" id="CHEBI:57875"/>
        <dbReference type="ChEBI" id="CHEBI:62537"/>
        <dbReference type="ChEBI" id="CHEBI:64612"/>
    </reaction>
    <physiologicalReaction direction="left-to-right" evidence="4">
        <dbReference type="Rhea" id="RHEA:45189"/>
    </physiologicalReaction>
</comment>
<comment type="catalytic activity">
    <reaction evidence="4">
        <text>1,2-dihexadecanoyl-sn-glycero-3-phosphocholine + H2O = 1-hexadecanoyl-sn-glycero-3-phosphocholine + hexadecanoate + H(+)</text>
        <dbReference type="Rhea" id="RHEA:41223"/>
        <dbReference type="ChEBI" id="CHEBI:7896"/>
        <dbReference type="ChEBI" id="CHEBI:15377"/>
        <dbReference type="ChEBI" id="CHEBI:15378"/>
        <dbReference type="ChEBI" id="CHEBI:72998"/>
        <dbReference type="ChEBI" id="CHEBI:72999"/>
    </reaction>
    <physiologicalReaction direction="left-to-right" evidence="4">
        <dbReference type="Rhea" id="RHEA:41224"/>
    </physiologicalReaction>
</comment>
<comment type="catalytic activity">
    <reaction evidence="4">
        <text>1,2-dihexadecanoyl-sn-glycero-3-phosphocholine + H2O = 2-hexadecanoyl-sn-glycero-3-phosphocholine + hexadecanoate + H(+)</text>
        <dbReference type="Rhea" id="RHEA:40487"/>
        <dbReference type="ChEBI" id="CHEBI:7896"/>
        <dbReference type="ChEBI" id="CHEBI:15377"/>
        <dbReference type="ChEBI" id="CHEBI:15378"/>
        <dbReference type="ChEBI" id="CHEBI:72999"/>
        <dbReference type="ChEBI" id="CHEBI:76078"/>
    </reaction>
    <physiologicalReaction direction="left-to-right" evidence="4">
        <dbReference type="Rhea" id="RHEA:40488"/>
    </physiologicalReaction>
</comment>
<comment type="catalytic activity">
    <reaction evidence="4">
        <text>1-hexadecanoyl-2-(9Z-octadecenoyl)-sn-glycero-3-phosphocholine + H2O = 2-(9Z-octadecenoyl)-sn-glycero-3-phosphocholine + hexadecanoate + H(+)</text>
        <dbReference type="Rhea" id="RHEA:38783"/>
        <dbReference type="ChEBI" id="CHEBI:7896"/>
        <dbReference type="ChEBI" id="CHEBI:15377"/>
        <dbReference type="ChEBI" id="CHEBI:15378"/>
        <dbReference type="ChEBI" id="CHEBI:73001"/>
        <dbReference type="ChEBI" id="CHEBI:76071"/>
    </reaction>
    <physiologicalReaction direction="left-to-right" evidence="4">
        <dbReference type="Rhea" id="RHEA:38784"/>
    </physiologicalReaction>
</comment>
<comment type="catalytic activity">
    <reaction evidence="4">
        <text>1-hexadecanoyl-2-(9Z-octadecenoyl)-sn-glycero-3-phosphocholine + H2O = 1-hexadecanoyl-sn-glycero-3-phosphocholine + (9Z)-octadecenoate + H(+)</text>
        <dbReference type="Rhea" id="RHEA:38779"/>
        <dbReference type="ChEBI" id="CHEBI:15377"/>
        <dbReference type="ChEBI" id="CHEBI:15378"/>
        <dbReference type="ChEBI" id="CHEBI:30823"/>
        <dbReference type="ChEBI" id="CHEBI:72998"/>
        <dbReference type="ChEBI" id="CHEBI:73001"/>
    </reaction>
    <physiologicalReaction direction="left-to-right" evidence="4">
        <dbReference type="Rhea" id="RHEA:38780"/>
    </physiologicalReaction>
</comment>
<comment type="catalytic activity">
    <reaction evidence="4">
        <text>1-hexadecanoyl-2-(5Z,8Z,11Z,14Z-eicosatetraenoyl)-sn-glycero-3-phosphocholine + H2O = 2-(5Z,8Z,11Z,14Z)-eicosatetraenoyl-sn-glycero-3-phosphocholine + hexadecanoate + H(+)</text>
        <dbReference type="Rhea" id="RHEA:40571"/>
        <dbReference type="ChEBI" id="CHEBI:7896"/>
        <dbReference type="ChEBI" id="CHEBI:15377"/>
        <dbReference type="ChEBI" id="CHEBI:15378"/>
        <dbReference type="ChEBI" id="CHEBI:73003"/>
        <dbReference type="ChEBI" id="CHEBI:76079"/>
    </reaction>
    <physiologicalReaction direction="left-to-right" evidence="4">
        <dbReference type="Rhea" id="RHEA:40572"/>
    </physiologicalReaction>
</comment>
<comment type="catalytic activity">
    <reaction evidence="4">
        <text>1-hexadecanoyl-2-(9Z,12Z-octadecadienoyl)-sn-glycero-3-phosphoethanolamine + H2O = 1-hexadecanoyl-sn-glycero-3-phosphoethanolamine + (9Z,12Z)-octadecadienoate + H(+)</text>
        <dbReference type="Rhea" id="RHEA:40815"/>
        <dbReference type="ChEBI" id="CHEBI:15377"/>
        <dbReference type="ChEBI" id="CHEBI:15378"/>
        <dbReference type="ChEBI" id="CHEBI:30245"/>
        <dbReference type="ChEBI" id="CHEBI:73004"/>
        <dbReference type="ChEBI" id="CHEBI:73008"/>
    </reaction>
    <physiologicalReaction direction="left-to-right" evidence="4">
        <dbReference type="Rhea" id="RHEA:40816"/>
    </physiologicalReaction>
</comment>
<comment type="catalytic activity">
    <reaction evidence="4">
        <text>1-hexadecanoyl-2-(9Z,12Z-octadecadienoyl)-sn-glycero-3-phosphoethanolamine + H2O = 2-(9Z,12Z)-octadecadienoyl-sn-glycero-3-phosphoethanolamine + hexadecanoate + H(+)</text>
        <dbReference type="Rhea" id="RHEA:45164"/>
        <dbReference type="ChEBI" id="CHEBI:7896"/>
        <dbReference type="ChEBI" id="CHEBI:15377"/>
        <dbReference type="ChEBI" id="CHEBI:15378"/>
        <dbReference type="ChEBI" id="CHEBI:73008"/>
        <dbReference type="ChEBI" id="CHEBI:76090"/>
    </reaction>
    <physiologicalReaction direction="left-to-right" evidence="4">
        <dbReference type="Rhea" id="RHEA:45165"/>
    </physiologicalReaction>
</comment>
<comment type="catalytic activity">
    <reaction evidence="4">
        <text>1-hexadecanoyl-2-(5Z,8Z,11Z,14Z-eicosatetraenoyl)-sn-glycero-3-phosphoethanolamine + H2O = 1-hexadecanoyl-sn-glycero-3-phosphoethanolamine + (5Z,8Z,11Z,14Z)-eicosatetraenoate + H(+)</text>
        <dbReference type="Rhea" id="RHEA:40431"/>
        <dbReference type="ChEBI" id="CHEBI:15377"/>
        <dbReference type="ChEBI" id="CHEBI:15378"/>
        <dbReference type="ChEBI" id="CHEBI:32395"/>
        <dbReference type="ChEBI" id="CHEBI:73004"/>
        <dbReference type="ChEBI" id="CHEBI:73009"/>
    </reaction>
    <physiologicalReaction direction="left-to-right" evidence="4">
        <dbReference type="Rhea" id="RHEA:40432"/>
    </physiologicalReaction>
</comment>
<comment type="catalytic activity">
    <reaction evidence="4">
        <text>1-hexadecanoyl-2-(5Z,8Z,11Z,14Z-eicosatetraenoyl)-sn-glycero-3-phosphoethanolamine + H2O = 2-(5Z,8Z,11Z,14Z)-eicosatetraenoyl-sn-glycero-3-phosphoethanolamine + hexadecanoate + H(+)</text>
        <dbReference type="Rhea" id="RHEA:41348"/>
        <dbReference type="ChEBI" id="CHEBI:7896"/>
        <dbReference type="ChEBI" id="CHEBI:15377"/>
        <dbReference type="ChEBI" id="CHEBI:15378"/>
        <dbReference type="ChEBI" id="CHEBI:73009"/>
        <dbReference type="ChEBI" id="CHEBI:76091"/>
    </reaction>
    <physiologicalReaction direction="left-to-right" evidence="4">
        <dbReference type="Rhea" id="RHEA:41349"/>
    </physiologicalReaction>
</comment>
<comment type="catalytic activity">
    <reaction evidence="4">
        <text>1,2-di-(9Z-octadecenoyl)-sn-glycero-3-phosphoethanolamine + 1,2-dihexadecanoyl-sn-glycero-3-phosphocholine = N-hexadecanoyl-1,2-di-(9Z-octadecenoyl)-sn-glycero-3-phosphoethanolamine + 2-hexadecanoyl-sn-glycero-3-phosphocholine + H(+)</text>
        <dbReference type="Rhea" id="RHEA:45172"/>
        <dbReference type="ChEBI" id="CHEBI:15378"/>
        <dbReference type="ChEBI" id="CHEBI:72999"/>
        <dbReference type="ChEBI" id="CHEBI:74986"/>
        <dbReference type="ChEBI" id="CHEBI:76078"/>
        <dbReference type="ChEBI" id="CHEBI:78097"/>
    </reaction>
    <physiologicalReaction direction="left-to-right" evidence="4">
        <dbReference type="Rhea" id="RHEA:45173"/>
    </physiologicalReaction>
</comment>
<comment type="catalytic activity">
    <reaction evidence="4 6">
        <text>1,2-di-(9Z-octadecenoyl)-sn-glycero-3-phosphoethanolamine + 1,2-dihexadecanoyl-sn-glycero-3-phosphocholine = N-hexadecanoyl-1,2-di-(9Z-octadecenoyl)-sn-glycero-3-phosphoethanolamine + 1-hexadecanoyl-sn-glycero-3-phosphocholine + H(+)</text>
        <dbReference type="Rhea" id="RHEA:45176"/>
        <dbReference type="ChEBI" id="CHEBI:15378"/>
        <dbReference type="ChEBI" id="CHEBI:72998"/>
        <dbReference type="ChEBI" id="CHEBI:72999"/>
        <dbReference type="ChEBI" id="CHEBI:74986"/>
        <dbReference type="ChEBI" id="CHEBI:78097"/>
    </reaction>
    <physiologicalReaction direction="left-to-right" evidence="4 6">
        <dbReference type="Rhea" id="RHEA:45177"/>
    </physiologicalReaction>
</comment>
<comment type="catalytic activity">
    <reaction evidence="5">
        <text>1-hexanoyl-2-acyl-sn-glycero-3-phosphocholine + H2O = 1-hexanoyl-sn-glycero-3-phosphocholine + a fatty acid + H(+)</text>
        <dbReference type="Rhea" id="RHEA:53500"/>
        <dbReference type="ChEBI" id="CHEBI:15377"/>
        <dbReference type="ChEBI" id="CHEBI:15378"/>
        <dbReference type="ChEBI" id="CHEBI:28868"/>
        <dbReference type="ChEBI" id="CHEBI:78215"/>
        <dbReference type="ChEBI" id="CHEBI:137403"/>
    </reaction>
    <physiologicalReaction direction="left-to-right" evidence="5">
        <dbReference type="Rhea" id="RHEA:53501"/>
    </physiologicalReaction>
</comment>
<comment type="catalytic activity">
    <reaction evidence="5">
        <text>1,2-diheptadecanoyl-sn-glycero-3-phosphoethanolamine + 1-(9Z-octadecenoyl)-2-hexadecanoyl-sn-glycero-3-phosphocholine = 1,2-diheptadecanoyl-sn-glycero-3-phospho-N-hexadecanoyl-ethanolamine + 1-(9Z-octadecenoyl)-sn-glycero-3-phosphocholine + H(+)</text>
        <dbReference type="Rhea" id="RHEA:53524"/>
        <dbReference type="ChEBI" id="CHEBI:15378"/>
        <dbReference type="ChEBI" id="CHEBI:28610"/>
        <dbReference type="ChEBI" id="CHEBI:74667"/>
        <dbReference type="ChEBI" id="CHEBI:138218"/>
        <dbReference type="ChEBI" id="CHEBI:138220"/>
    </reaction>
    <physiologicalReaction direction="left-to-right" evidence="5">
        <dbReference type="Rhea" id="RHEA:53525"/>
    </physiologicalReaction>
</comment>
<comment type="catalytic activity">
    <reaction evidence="5">
        <text>1,2-diheptadecanoyl-sn-glycero-3-phosphoethanolamine + 1-(9Z-octadecenoyl)-2-hexadecanoyl-sn-glycero-3-phosphocholine = 1,2-diheptadecanoyl-sn-glycero-3-phospho-N-(9Z-octadecenoyl)-ethanolamine + 2-hexadecanoyl-sn-glycero-3-phosphocholine + H(+)</text>
        <dbReference type="Rhea" id="RHEA:53528"/>
        <dbReference type="ChEBI" id="CHEBI:15378"/>
        <dbReference type="ChEBI" id="CHEBI:74667"/>
        <dbReference type="ChEBI" id="CHEBI:76078"/>
        <dbReference type="ChEBI" id="CHEBI:138218"/>
        <dbReference type="ChEBI" id="CHEBI:138222"/>
    </reaction>
    <physiologicalReaction direction="left-to-right" evidence="5">
        <dbReference type="Rhea" id="RHEA:53529"/>
    </physiologicalReaction>
</comment>
<comment type="catalytic activity">
    <reaction evidence="5">
        <text>1,2-dihexanoyl-sn-glycero-3-phosphocholine + 1,2-diheptanoyl-sn-glycero-3-phosphocholine = 1-heptanoyl-2-hexanoyl-sn-glycero-3-phosphocholine + 1-hexanoyl-2-heptanoyl-sn-glycero-3-phosphocholine</text>
        <dbReference type="Rhea" id="RHEA:54484"/>
        <dbReference type="ChEBI" id="CHEBI:138194"/>
        <dbReference type="ChEBI" id="CHEBI:138195"/>
        <dbReference type="ChEBI" id="CHEBI:138197"/>
        <dbReference type="ChEBI" id="CHEBI:138198"/>
    </reaction>
    <physiologicalReaction direction="left-to-right" evidence="5">
        <dbReference type="Rhea" id="RHEA:54485"/>
    </physiologicalReaction>
</comment>
<comment type="catalytic activity">
    <reaction evidence="5">
        <text>1,2-diheptanoyl-sn-glycero-3-phosphocholine + 1,2-dihexadecanoyl-sn-glycero-3-phosphocholine = 1-hexadecanoyl-2-heptanoyl-sn-glycero-3-phosphocholine + 1-heptanoyl-2-hexadecanoyl-sn-glycero-3-phosphocholine</text>
        <dbReference type="Rhea" id="RHEA:54488"/>
        <dbReference type="ChEBI" id="CHEBI:72999"/>
        <dbReference type="ChEBI" id="CHEBI:138195"/>
        <dbReference type="ChEBI" id="CHEBI:138199"/>
        <dbReference type="ChEBI" id="CHEBI:138200"/>
    </reaction>
    <physiologicalReaction direction="left-to-right" evidence="5">
        <dbReference type="Rhea" id="RHEA:54489"/>
    </physiologicalReaction>
</comment>
<comment type="catalytic activity">
    <reaction evidence="5">
        <text>1,2-dihexanoyl-sn-glycero-3-phosphoethanolamine + 1,2-diheptanoyl-sn-glycero-3-phosphocholine = 1-heptanoyl-2-hexanoyl-sn-glycero-3-phosphoethanolamine + 1-hexanoyl-2-heptanoyl-sn-glycero-3-phosphocholine</text>
        <dbReference type="Rhea" id="RHEA:54492"/>
        <dbReference type="ChEBI" id="CHEBI:138195"/>
        <dbReference type="ChEBI" id="CHEBI:138197"/>
        <dbReference type="ChEBI" id="CHEBI:138216"/>
        <dbReference type="ChEBI" id="CHEBI:138217"/>
    </reaction>
    <physiologicalReaction direction="left-to-right" evidence="5">
        <dbReference type="Rhea" id="RHEA:54493"/>
    </physiologicalReaction>
</comment>
<comment type="catalytic activity">
    <reaction evidence="5">
        <text>1-hexanoyl-2-acyl-sn-glycero-3-phosphocholine + H2O = hexanoate + a 2-acyl-sn-glycero-3-phosphocholine + H(+)</text>
        <dbReference type="Rhea" id="RHEA:53496"/>
        <dbReference type="ChEBI" id="CHEBI:15377"/>
        <dbReference type="ChEBI" id="CHEBI:15378"/>
        <dbReference type="ChEBI" id="CHEBI:17120"/>
        <dbReference type="ChEBI" id="CHEBI:57875"/>
        <dbReference type="ChEBI" id="CHEBI:137403"/>
    </reaction>
    <physiologicalReaction direction="left-to-right" evidence="5">
        <dbReference type="Rhea" id="RHEA:53497"/>
    </physiologicalReaction>
</comment>
<comment type="catalytic activity">
    <reaction evidence="5">
        <text>1,2-dihexanoyl-sn-glycero-3-phosphoethanolamine + 2-heptanoyl-sn-glycero-3-phosphocholine = hexanoyl-sn-glycero-3-phosphoethanolamine + 1-hexanoyl-2-heptanoyl-sn-glycero-3-phosphocholine</text>
        <dbReference type="Rhea" id="RHEA:54544"/>
        <dbReference type="ChEBI" id="CHEBI:138197"/>
        <dbReference type="ChEBI" id="CHEBI:138216"/>
        <dbReference type="ChEBI" id="CHEBI:138266"/>
        <dbReference type="ChEBI" id="CHEBI:138267"/>
    </reaction>
    <physiologicalReaction direction="left-to-right" evidence="5">
        <dbReference type="Rhea" id="RHEA:54545"/>
    </physiologicalReaction>
</comment>
<comment type="biophysicochemical properties">
    <kinetics>
        <KM evidence="4">300 uM for dipalmitoyl-PC</KM>
        <Vmax evidence="4">670.0 nmol/min/mg enzyme with dipalmitoyl-PC as substrate</Vmax>
        <Vmax evidence="4">122.0 nmol/min/mg enzyme with dipalmitoyl-PE as substrate</Vmax>
        <Vmax evidence="4">103.0 nmol/min/mg enzyme using dipalmitoyl-PC as an acyl donor and PE as an acyl acceptor</Vmax>
    </kinetics>
    <phDependence>
        <text evidence="4">Optimum pH is 8.</text>
    </phDependence>
</comment>
<comment type="interaction">
    <interactant intactId="EBI-12253270">
        <id>Q9NWW9</id>
    </interactant>
    <interactant intactId="EBI-12092171">
        <id>Q12797-6</id>
        <label>ASPH</label>
    </interactant>
    <organismsDiffer>false</organismsDiffer>
    <experiments>3</experiments>
</comment>
<comment type="interaction">
    <interactant intactId="EBI-12253270">
        <id>Q9NWW9</id>
    </interactant>
    <interactant intactId="EBI-749311">
        <id>P37235</id>
        <label>HPCAL1</label>
    </interactant>
    <organismsDiffer>false</organismsDiffer>
    <experiments>3</experiments>
</comment>
<comment type="interaction">
    <interactant intactId="EBI-12253270">
        <id>Q9NWW9</id>
    </interactant>
    <interactant intactId="EBI-749635">
        <id>P61601</id>
        <label>NCALD</label>
    </interactant>
    <organismsDiffer>false</organismsDiffer>
    <experiments>3</experiments>
</comment>
<comment type="interaction">
    <interactant intactId="EBI-12253270">
        <id>Q9NWW9</id>
    </interactant>
    <interactant intactId="EBI-749370">
        <id>Q9BSL1</id>
        <label>UBAC1</label>
    </interactant>
    <organismsDiffer>false</organismsDiffer>
    <experiments>3</experiments>
</comment>
<comment type="interaction">
    <interactant intactId="EBI-12253270">
        <id>Q9NWW9</id>
    </interactant>
    <interactant intactId="EBI-741480">
        <id>Q9UMX0</id>
        <label>UBQLN1</label>
    </interactant>
    <organismsDiffer>false</organismsDiffer>
    <experiments>3</experiments>
</comment>
<comment type="interaction">
    <interactant intactId="EBI-12253270">
        <id>Q9NWW9</id>
    </interactant>
    <interactant intactId="EBI-947187">
        <id>Q9UHD9</id>
        <label>UBQLN2</label>
    </interactant>
    <organismsDiffer>false</organismsDiffer>
    <experiments>3</experiments>
</comment>
<comment type="subcellular location">
    <subcellularLocation>
        <location evidence="3">Cytoplasm</location>
    </subcellularLocation>
    <subcellularLocation>
        <location evidence="1">Membrane</location>
        <topology evidence="1">Single-pass membrane protein</topology>
    </subcellularLocation>
    <text evidence="3">Exhibits a granular pattern in the cytoplasm with preferential perinuclear localization.</text>
</comment>
<comment type="tissue specificity">
    <text evidence="3 4">Expressed in liver, kidney, small intestine testis and colon (PubMed:19615464). Undetectable in testis, placenta, salivary gland and fetal brain (PubMed:18163183).</text>
</comment>
<comment type="similarity">
    <text evidence="8">Belongs to the H-rev107 family.</text>
</comment>
<name>PLAT2_HUMAN</name>